<comment type="function">
    <text evidence="1">Binds retinol and different fatty acids.</text>
</comment>
<comment type="subcellular location">
    <subcellularLocation>
        <location evidence="2">Secreted</location>
    </subcellularLocation>
</comment>
<comment type="PTM">
    <text evidence="4">Not glycosylated.</text>
</comment>
<comment type="similarity">
    <text evidence="2 5">Belongs to the fatty-acid and retinol-binding protein (FARBP) family.</text>
</comment>
<proteinExistence type="evidence at protein level"/>
<accession>Q8WT54</accession>
<organism>
    <name type="scientific">Wuchereria bancrofti</name>
    <dbReference type="NCBI Taxonomy" id="6293"/>
    <lineage>
        <taxon>Eukaryota</taxon>
        <taxon>Metazoa</taxon>
        <taxon>Ecdysozoa</taxon>
        <taxon>Nematoda</taxon>
        <taxon>Chromadorea</taxon>
        <taxon>Rhabditida</taxon>
        <taxon>Spirurina</taxon>
        <taxon>Spiruromorpha</taxon>
        <taxon>Filarioidea</taxon>
        <taxon>Onchocercidae</taxon>
        <taxon>Wuchereria</taxon>
    </lineage>
</organism>
<gene>
    <name evidence="6" type="primary">far-1</name>
</gene>
<sequence length="178" mass="20259">MYHRLILLALIGTTMANVIPFSMSTIPEEYKEFIPEEVRNFYKDLTVEDKEILRELASKHATFANEDAALEALKAKSDNLYKNAVELRNFVKAKIDSLKPDAKTFVDEIIAKARSLRSDDGHKLDTEKIKQAARDIIAKYQALSEETKEELKVTFPAIAKIIGNEKLKRNASTFLQKN</sequence>
<protein>
    <recommendedName>
        <fullName>Fatty-acid and retinol-binding protein 1</fullName>
    </recommendedName>
    <alternativeName>
        <fullName>Wb-FAR-1</fullName>
    </alternativeName>
</protein>
<name>FAR1_WUCBA</name>
<evidence type="ECO:0000250" key="1"/>
<evidence type="ECO:0000250" key="2">
    <source>
        <dbReference type="UniProtKB" id="Q25619"/>
    </source>
</evidence>
<evidence type="ECO:0000255" key="3"/>
<evidence type="ECO:0000269" key="4">
    <source>
    </source>
</evidence>
<evidence type="ECO:0000305" key="5"/>
<evidence type="ECO:0000312" key="6">
    <source>
        <dbReference type="EMBL" id="AAL33794.1"/>
    </source>
</evidence>
<reference evidence="6" key="1">
    <citation type="journal article" date="2002" name="Mol. Biochem. Parasitol.">
        <title>The FAR proteins of filarial nematodes: secretion, glycosylation and lipid binding characteristics.</title>
        <authorList>
            <person name="Garofalo A."/>
            <person name="Klager S.L."/>
            <person name="Rowlinson M.C."/>
            <person name="Nirmalan N."/>
            <person name="Klion A.D."/>
            <person name="Allen J.E."/>
            <person name="Kennedy M.W."/>
            <person name="Bradley J.E."/>
        </authorList>
    </citation>
    <scope>NUCLEOTIDE SEQUENCE [MRNA]</scope>
    <scope>LACK OF GLYCOSYLATION</scope>
</reference>
<keyword id="KW-0175">Coiled coil</keyword>
<keyword id="KW-0446">Lipid-binding</keyword>
<keyword id="KW-0683">Retinol-binding</keyword>
<keyword id="KW-0964">Secreted</keyword>
<keyword id="KW-0732">Signal</keyword>
<keyword id="KW-0845">Vitamin A</keyword>
<feature type="signal peptide" evidence="3">
    <location>
        <begin position="1"/>
        <end position="16"/>
    </location>
</feature>
<feature type="chain" id="PRO_0000008766" description="Fatty-acid and retinol-binding protein 1" evidence="3">
    <location>
        <begin position="17"/>
        <end position="178"/>
    </location>
</feature>
<feature type="coiled-coil region" evidence="3">
    <location>
        <begin position="67"/>
        <end position="89"/>
    </location>
</feature>
<feature type="coiled-coil region" evidence="3">
    <location>
        <begin position="130"/>
        <end position="153"/>
    </location>
</feature>
<dbReference type="EMBL" id="AY050258">
    <property type="protein sequence ID" value="AAL33794.1"/>
    <property type="molecule type" value="mRNA"/>
</dbReference>
<dbReference type="SMR" id="Q8WT54"/>
<dbReference type="STRING" id="6293.Q8WT54"/>
<dbReference type="Proteomes" id="UP000093561">
    <property type="component" value="Unassembled WGS sequence"/>
</dbReference>
<dbReference type="GO" id="GO:0005576">
    <property type="term" value="C:extracellular region"/>
    <property type="evidence" value="ECO:0000250"/>
    <property type="project" value="UniProtKB"/>
</dbReference>
<dbReference type="GO" id="GO:0005504">
    <property type="term" value="F:fatty acid binding"/>
    <property type="evidence" value="ECO:0000250"/>
    <property type="project" value="UniProtKB"/>
</dbReference>
<dbReference type="GO" id="GO:0016918">
    <property type="term" value="F:retinal binding"/>
    <property type="evidence" value="ECO:0007669"/>
    <property type="project" value="UniProtKB-KW"/>
</dbReference>
<dbReference type="GO" id="GO:0019841">
    <property type="term" value="F:retinol binding"/>
    <property type="evidence" value="ECO:0000250"/>
    <property type="project" value="UniProtKB"/>
</dbReference>
<dbReference type="FunFam" id="1.20.120.1100:FF:000001">
    <property type="entry name" value="Fatty-acid and retinol-binding protein 1"/>
    <property type="match status" value="1"/>
</dbReference>
<dbReference type="Gene3D" id="1.20.120.1100">
    <property type="match status" value="1"/>
</dbReference>
<dbReference type="InterPro" id="IPR008632">
    <property type="entry name" value="Gp-FAR-1"/>
</dbReference>
<dbReference type="PANTHER" id="PTHR31418">
    <property type="entry name" value="FATTY-ACID AND RETINOL-BINDING PROTEIN 1"/>
    <property type="match status" value="1"/>
</dbReference>
<dbReference type="PANTHER" id="PTHR31418:SF7">
    <property type="entry name" value="FATTY-ACID AND RETINOL-BINDING PROTEIN 1"/>
    <property type="match status" value="1"/>
</dbReference>
<dbReference type="Pfam" id="PF05823">
    <property type="entry name" value="Gp-FAR-1"/>
    <property type="match status" value="1"/>
</dbReference>